<gene>
    <name type="primary">prmt2</name>
</gene>
<accession>B3DLB3</accession>
<accession>Q08CW9</accession>
<proteinExistence type="evidence at transcript level"/>
<evidence type="ECO:0000250" key="1"/>
<evidence type="ECO:0000250" key="2">
    <source>
        <dbReference type="UniProtKB" id="P55345"/>
    </source>
</evidence>
<evidence type="ECO:0000255" key="3">
    <source>
        <dbReference type="PROSITE-ProRule" id="PRU00192"/>
    </source>
</evidence>
<evidence type="ECO:0000255" key="4">
    <source>
        <dbReference type="PROSITE-ProRule" id="PRU01015"/>
    </source>
</evidence>
<evidence type="ECO:0000256" key="5">
    <source>
        <dbReference type="SAM" id="MobiDB-lite"/>
    </source>
</evidence>
<evidence type="ECO:0000303" key="6">
    <source ref="1"/>
</evidence>
<reference key="1">
    <citation type="submission" date="2008-06" db="EMBL/GenBank/DDBJ databases">
        <authorList>
            <consortium name="NIH - Xenopus Gene Collection (XGC) project"/>
        </authorList>
    </citation>
    <scope>NUCLEOTIDE SEQUENCE [LARGE SCALE MRNA] (ISOFORMS 1 AND 2)</scope>
    <source>
        <strain>N6</strain>
        <tissue>Intestine</tissue>
        <tissue>Oviduct</tissue>
    </source>
</reference>
<sequence>MSTSGCSSEKSDFQDSTEGEEEEDTQSENLCMREYVVIRDYMAADATQLSLCFGDKVLLLSAVTQDWWWVKHNGICGYVPASYLHDALNDQEDTEVDDPWQDEEYYGSYKTLKLHLEMLSDVPRTTAYKEVILRNSSSLCGKHILDLGCGTGIISFFCAKLAQPEAVYAVEASEIAEQTRRLVKQNGISNLVHVIRQRAEELQLPTKVDILVSEWMGTCLLFEFMLESVLQARDRWLKEDGVMWPSTACIHLVPCSASKEYANKVLFWDNPYQLDFSLLKPLAAKEFFARPKPDYVLQPEDCLSEPCILLHLNLKTLQLAELERMNSDFTFFVHTDGLLHGFTAWFSVQFQNLEEQGQLELNTGPFSPLTHWKHTLFMLDEPLQVQKGDKISGSVVFQRNSVWRRHMSVTLSWVINGKLTMQNVSQQWQAILA</sequence>
<protein>
    <recommendedName>
        <fullName>Protein arginine N-methyltransferase 2</fullName>
        <ecNumber evidence="2">2.1.1.319</ecNumber>
    </recommendedName>
    <alternativeName>
        <fullName>Histone-arginine N-methyltransferase PRMT2</fullName>
    </alternativeName>
</protein>
<comment type="function">
    <text evidence="1">Arginine methyltransferase that methylates the guanidino nitrogens of arginyl residues in proteins such as histones. Involved in growth regulation. Involved in embryonic dorsal development.</text>
</comment>
<comment type="catalytic activity">
    <reaction evidence="2">
        <text>L-arginyl-[protein] + 2 S-adenosyl-L-methionine = N(omega),N(omega)-dimethyl-L-arginyl-[protein] + 2 S-adenosyl-L-homocysteine + 2 H(+)</text>
        <dbReference type="Rhea" id="RHEA:48096"/>
        <dbReference type="Rhea" id="RHEA-COMP:10532"/>
        <dbReference type="Rhea" id="RHEA-COMP:11991"/>
        <dbReference type="ChEBI" id="CHEBI:15378"/>
        <dbReference type="ChEBI" id="CHEBI:29965"/>
        <dbReference type="ChEBI" id="CHEBI:57856"/>
        <dbReference type="ChEBI" id="CHEBI:59789"/>
        <dbReference type="ChEBI" id="CHEBI:61897"/>
        <dbReference type="EC" id="2.1.1.319"/>
    </reaction>
</comment>
<comment type="subunit">
    <text evidence="1">Interacts with ctnnb1.</text>
</comment>
<comment type="subcellular location">
    <subcellularLocation>
        <location evidence="1">Cytoplasm</location>
    </subcellularLocation>
    <subcellularLocation>
        <location evidence="1">Nucleus</location>
    </subcellularLocation>
</comment>
<comment type="alternative products">
    <event type="alternative splicing"/>
    <isoform>
        <id>B3DLB3-1</id>
        <name>1</name>
        <sequence type="displayed"/>
    </isoform>
    <isoform>
        <id>B3DLB3-2</id>
        <name>2</name>
        <sequence type="described" ref="VSP_040525"/>
    </isoform>
</comment>
<comment type="similarity">
    <text evidence="4">Belongs to the class I-like SAM-binding methyltransferase superfamily. Protein arginine N-methyltransferase family.</text>
</comment>
<name>ANM2_XENTR</name>
<dbReference type="EC" id="2.1.1.319" evidence="2"/>
<dbReference type="EMBL" id="BC124052">
    <property type="protein sequence ID" value="AAI24053.1"/>
    <property type="molecule type" value="mRNA"/>
</dbReference>
<dbReference type="EMBL" id="BC167381">
    <property type="protein sequence ID" value="AAI67381.1"/>
    <property type="molecule type" value="mRNA"/>
</dbReference>
<dbReference type="RefSeq" id="NP_001072706.2">
    <property type="nucleotide sequence ID" value="NM_001079238.2"/>
</dbReference>
<dbReference type="SMR" id="B3DLB3"/>
<dbReference type="FunCoup" id="B3DLB3">
    <property type="interactions" value="2193"/>
</dbReference>
<dbReference type="STRING" id="8364.ENSXETP00000019440"/>
<dbReference type="PaxDb" id="8364-ENSXETP00000062304"/>
<dbReference type="DNASU" id="780163"/>
<dbReference type="GeneID" id="780163"/>
<dbReference type="KEGG" id="xtr:780163"/>
<dbReference type="CTD" id="3275"/>
<dbReference type="eggNOG" id="KOG1499">
    <property type="taxonomic scope" value="Eukaryota"/>
</dbReference>
<dbReference type="InParanoid" id="B3DLB3"/>
<dbReference type="OrthoDB" id="7848332at2759"/>
<dbReference type="Proteomes" id="UP000008143">
    <property type="component" value="Chromosome 9"/>
</dbReference>
<dbReference type="GO" id="GO:0005737">
    <property type="term" value="C:cytoplasm"/>
    <property type="evidence" value="ECO:0000250"/>
    <property type="project" value="UniProtKB"/>
</dbReference>
<dbReference type="GO" id="GO:0005634">
    <property type="term" value="C:nucleus"/>
    <property type="evidence" value="ECO:0000250"/>
    <property type="project" value="UniProtKB"/>
</dbReference>
<dbReference type="GO" id="GO:0140938">
    <property type="term" value="F:histone H3 methyltransferase activity"/>
    <property type="evidence" value="ECO:0000250"/>
    <property type="project" value="UniProtKB"/>
</dbReference>
<dbReference type="GO" id="GO:0140592">
    <property type="term" value="F:histone H3R8 methyltransferase activity"/>
    <property type="evidence" value="ECO:0000250"/>
    <property type="project" value="UniProtKB"/>
</dbReference>
<dbReference type="GO" id="GO:0042054">
    <property type="term" value="F:histone methyltransferase activity"/>
    <property type="evidence" value="ECO:0000250"/>
    <property type="project" value="UniProtKB"/>
</dbReference>
<dbReference type="GO" id="GO:0030331">
    <property type="term" value="F:nuclear estrogen receptor binding"/>
    <property type="evidence" value="ECO:0000250"/>
    <property type="project" value="UniProtKB"/>
</dbReference>
<dbReference type="GO" id="GO:0016274">
    <property type="term" value="F:protein-arginine N-methyltransferase activity"/>
    <property type="evidence" value="ECO:0000250"/>
    <property type="project" value="UniProtKB"/>
</dbReference>
<dbReference type="GO" id="GO:0035242">
    <property type="term" value="F:protein-arginine omega-N asymmetric methyltransferase activity"/>
    <property type="evidence" value="ECO:0007669"/>
    <property type="project" value="UniProtKB-EC"/>
</dbReference>
<dbReference type="GO" id="GO:0044877">
    <property type="term" value="F:protein-containing complex binding"/>
    <property type="evidence" value="ECO:0000250"/>
    <property type="project" value="UniProtKB"/>
</dbReference>
<dbReference type="GO" id="GO:0048588">
    <property type="term" value="P:developmental cell growth"/>
    <property type="evidence" value="ECO:0000250"/>
    <property type="project" value="UniProtKB"/>
</dbReference>
<dbReference type="GO" id="GO:0032259">
    <property type="term" value="P:methylation"/>
    <property type="evidence" value="ECO:0007669"/>
    <property type="project" value="UniProtKB-KW"/>
</dbReference>
<dbReference type="GO" id="GO:0043433">
    <property type="term" value="P:negative regulation of DNA-binding transcription factor activity"/>
    <property type="evidence" value="ECO:0000250"/>
    <property type="project" value="UniProtKB"/>
</dbReference>
<dbReference type="GO" id="GO:0045892">
    <property type="term" value="P:negative regulation of DNA-templated transcription"/>
    <property type="evidence" value="ECO:0000250"/>
    <property type="project" value="UniProtKB"/>
</dbReference>
<dbReference type="GO" id="GO:2000134">
    <property type="term" value="P:negative regulation of G1/S transition of mitotic cell cycle"/>
    <property type="evidence" value="ECO:0000250"/>
    <property type="project" value="UniProtKB"/>
</dbReference>
<dbReference type="GO" id="GO:0032088">
    <property type="term" value="P:negative regulation of NF-kappaB transcription factor activity"/>
    <property type="evidence" value="ECO:0000250"/>
    <property type="project" value="UniProtKB"/>
</dbReference>
<dbReference type="GO" id="GO:0043065">
    <property type="term" value="P:positive regulation of apoptotic process"/>
    <property type="evidence" value="ECO:0000250"/>
    <property type="project" value="UniProtKB"/>
</dbReference>
<dbReference type="GO" id="GO:0045893">
    <property type="term" value="P:positive regulation of DNA-templated transcription"/>
    <property type="evidence" value="ECO:0000250"/>
    <property type="project" value="UniProtKB"/>
</dbReference>
<dbReference type="GO" id="GO:0060765">
    <property type="term" value="P:regulation of androgen receptor signaling pathway"/>
    <property type="evidence" value="ECO:0000250"/>
    <property type="project" value="UniProtKB"/>
</dbReference>
<dbReference type="CDD" id="cd02440">
    <property type="entry name" value="AdoMet_MTases"/>
    <property type="match status" value="1"/>
</dbReference>
<dbReference type="FunFam" id="2.30.30.40:FF:000385">
    <property type="entry name" value="Protein arginine N-methyltransferase 2"/>
    <property type="match status" value="1"/>
</dbReference>
<dbReference type="FunFam" id="2.70.160.11:FF:000007">
    <property type="entry name" value="Protein arginine N-methyltransferase 2"/>
    <property type="match status" value="1"/>
</dbReference>
<dbReference type="FunFam" id="3.40.50.150:FF:000016">
    <property type="entry name" value="Protein arginine N-methyltransferase 6"/>
    <property type="match status" value="1"/>
</dbReference>
<dbReference type="Gene3D" id="2.70.160.11">
    <property type="entry name" value="Hnrnp arginine n-methyltransferase1"/>
    <property type="match status" value="1"/>
</dbReference>
<dbReference type="Gene3D" id="2.30.30.40">
    <property type="entry name" value="SH3 Domains"/>
    <property type="match status" value="1"/>
</dbReference>
<dbReference type="Gene3D" id="3.40.50.150">
    <property type="entry name" value="Vaccinia Virus protein VP39"/>
    <property type="match status" value="1"/>
</dbReference>
<dbReference type="InterPro" id="IPR025799">
    <property type="entry name" value="Arg_MeTrfase"/>
</dbReference>
<dbReference type="InterPro" id="IPR041698">
    <property type="entry name" value="Methyltransf_25"/>
</dbReference>
<dbReference type="InterPro" id="IPR055135">
    <property type="entry name" value="PRMT_dom"/>
</dbReference>
<dbReference type="InterPro" id="IPR029063">
    <property type="entry name" value="SAM-dependent_MTases_sf"/>
</dbReference>
<dbReference type="InterPro" id="IPR036028">
    <property type="entry name" value="SH3-like_dom_sf"/>
</dbReference>
<dbReference type="InterPro" id="IPR001452">
    <property type="entry name" value="SH3_domain"/>
</dbReference>
<dbReference type="PANTHER" id="PTHR11006">
    <property type="entry name" value="PROTEIN ARGININE N-METHYLTRANSFERASE"/>
    <property type="match status" value="1"/>
</dbReference>
<dbReference type="PANTHER" id="PTHR11006:SF92">
    <property type="entry name" value="PROTEIN ARGININE N-METHYLTRANSFERASE 2"/>
    <property type="match status" value="1"/>
</dbReference>
<dbReference type="Pfam" id="PF13649">
    <property type="entry name" value="Methyltransf_25"/>
    <property type="match status" value="1"/>
</dbReference>
<dbReference type="Pfam" id="PF22528">
    <property type="entry name" value="PRMT_C"/>
    <property type="match status" value="1"/>
</dbReference>
<dbReference type="Pfam" id="PF14604">
    <property type="entry name" value="SH3_9"/>
    <property type="match status" value="1"/>
</dbReference>
<dbReference type="SMART" id="SM00326">
    <property type="entry name" value="SH3"/>
    <property type="match status" value="1"/>
</dbReference>
<dbReference type="SUPFAM" id="SSF53335">
    <property type="entry name" value="S-adenosyl-L-methionine-dependent methyltransferases"/>
    <property type="match status" value="1"/>
</dbReference>
<dbReference type="SUPFAM" id="SSF50044">
    <property type="entry name" value="SH3-domain"/>
    <property type="match status" value="1"/>
</dbReference>
<dbReference type="PROSITE" id="PS51678">
    <property type="entry name" value="SAM_MT_PRMT"/>
    <property type="match status" value="1"/>
</dbReference>
<dbReference type="PROSITE" id="PS50002">
    <property type="entry name" value="SH3"/>
    <property type="match status" value="1"/>
</dbReference>
<keyword id="KW-0025">Alternative splicing</keyword>
<keyword id="KW-0963">Cytoplasm</keyword>
<keyword id="KW-0489">Methyltransferase</keyword>
<keyword id="KW-0539">Nucleus</keyword>
<keyword id="KW-1185">Reference proteome</keyword>
<keyword id="KW-0949">S-adenosyl-L-methionine</keyword>
<keyword id="KW-0728">SH3 domain</keyword>
<keyword id="KW-0808">Transferase</keyword>
<feature type="chain" id="PRO_0000404156" description="Protein arginine N-methyltransferase 2">
    <location>
        <begin position="1"/>
        <end position="433"/>
    </location>
</feature>
<feature type="domain" description="SH3" evidence="3">
    <location>
        <begin position="30"/>
        <end position="89"/>
    </location>
</feature>
<feature type="domain" description="SAM-dependent MTase PRMT-type" evidence="4">
    <location>
        <begin position="102"/>
        <end position="416"/>
    </location>
</feature>
<feature type="region of interest" description="Disordered" evidence="5">
    <location>
        <begin position="1"/>
        <end position="27"/>
    </location>
</feature>
<feature type="compositionally biased region" description="Acidic residues" evidence="5">
    <location>
        <begin position="15"/>
        <end position="26"/>
    </location>
</feature>
<feature type="active site" evidence="1">
    <location>
        <position position="214"/>
    </location>
</feature>
<feature type="active site" evidence="1">
    <location>
        <position position="223"/>
    </location>
</feature>
<feature type="binding site" evidence="1">
    <location>
        <position position="115"/>
    </location>
    <ligand>
        <name>S-adenosyl-L-methionine</name>
        <dbReference type="ChEBI" id="CHEBI:59789"/>
    </ligand>
</feature>
<feature type="binding site" evidence="1">
    <location>
        <position position="124"/>
    </location>
    <ligand>
        <name>S-adenosyl-L-methionine</name>
        <dbReference type="ChEBI" id="CHEBI:59789"/>
    </ligand>
</feature>
<feature type="binding site" evidence="1">
    <location>
        <position position="148"/>
    </location>
    <ligand>
        <name>S-adenosyl-L-methionine</name>
        <dbReference type="ChEBI" id="CHEBI:59789"/>
    </ligand>
</feature>
<feature type="binding site" evidence="1">
    <location>
        <position position="171"/>
    </location>
    <ligand>
        <name>S-adenosyl-L-methionine</name>
        <dbReference type="ChEBI" id="CHEBI:59789"/>
    </ligand>
</feature>
<feature type="binding site" evidence="1">
    <location>
        <position position="200"/>
    </location>
    <ligand>
        <name>S-adenosyl-L-methionine</name>
        <dbReference type="ChEBI" id="CHEBI:59789"/>
    </ligand>
</feature>
<feature type="splice variant" id="VSP_040525" description="In isoform 2." evidence="6">
    <original>RMNSDFTFFVHTDGLLHGFTAWFSVQFQNLEEQGQLELNTGPFSPLTHWKHTLFMLDEPLQVQKGDKISGSVVFQRNSVWRRHMSVTLSWVINGKLTMQNVSQQWQAILA</original>
    <variation>VRAILSNLH</variation>
    <location>
        <begin position="324"/>
        <end position="433"/>
    </location>
</feature>
<organism>
    <name type="scientific">Xenopus tropicalis</name>
    <name type="common">Western clawed frog</name>
    <name type="synonym">Silurana tropicalis</name>
    <dbReference type="NCBI Taxonomy" id="8364"/>
    <lineage>
        <taxon>Eukaryota</taxon>
        <taxon>Metazoa</taxon>
        <taxon>Chordata</taxon>
        <taxon>Craniata</taxon>
        <taxon>Vertebrata</taxon>
        <taxon>Euteleostomi</taxon>
        <taxon>Amphibia</taxon>
        <taxon>Batrachia</taxon>
        <taxon>Anura</taxon>
        <taxon>Pipoidea</taxon>
        <taxon>Pipidae</taxon>
        <taxon>Xenopodinae</taxon>
        <taxon>Xenopus</taxon>
        <taxon>Silurana</taxon>
    </lineage>
</organism>